<comment type="subunit">
    <text evidence="1">Interacts with PRDX6.</text>
</comment>
<comment type="subcellular location">
    <subcellularLocation>
        <location evidence="1">Cytoplasm</location>
    </subcellularLocation>
    <subcellularLocation>
        <location evidence="1">Nucleus</location>
    </subcellularLocation>
</comment>
<feature type="chain" id="PRO_0000072273" description="Saitohin">
    <location>
        <begin position="1"/>
        <end position="128"/>
    </location>
</feature>
<feature type="region of interest" description="Disordered" evidence="2">
    <location>
        <begin position="77"/>
        <end position="128"/>
    </location>
</feature>
<feature type="compositionally biased region" description="Polar residues" evidence="2">
    <location>
        <begin position="77"/>
        <end position="87"/>
    </location>
</feature>
<organism>
    <name type="scientific">Pan troglodytes</name>
    <name type="common">Chimpanzee</name>
    <dbReference type="NCBI Taxonomy" id="9598"/>
    <lineage>
        <taxon>Eukaryota</taxon>
        <taxon>Metazoa</taxon>
        <taxon>Chordata</taxon>
        <taxon>Craniata</taxon>
        <taxon>Vertebrata</taxon>
        <taxon>Euteleostomi</taxon>
        <taxon>Mammalia</taxon>
        <taxon>Eutheria</taxon>
        <taxon>Euarchontoglires</taxon>
        <taxon>Primates</taxon>
        <taxon>Haplorrhini</taxon>
        <taxon>Catarrhini</taxon>
        <taxon>Hominidae</taxon>
        <taxon>Pan</taxon>
    </lineage>
</organism>
<gene>
    <name type="primary">STH</name>
</gene>
<reference key="1">
    <citation type="journal article" date="2004" name="Gene">
        <title>Tau gene (MAPT) sequence variation among primates.</title>
        <authorList>
            <person name="Holzer M."/>
            <person name="Craxton M."/>
            <person name="Jakes R."/>
            <person name="Arendt T."/>
            <person name="Goedert M."/>
        </authorList>
    </citation>
    <scope>NUCLEOTIDE SEQUENCE [GENOMIC DNA]</scope>
</reference>
<evidence type="ECO:0000250" key="1"/>
<evidence type="ECO:0000256" key="2">
    <source>
        <dbReference type="SAM" id="MobiDB-lite"/>
    </source>
</evidence>
<accession>Q5YCU8</accession>
<keyword id="KW-0963">Cytoplasm</keyword>
<keyword id="KW-0539">Nucleus</keyword>
<keyword id="KW-1185">Reference proteome</keyword>
<protein>
    <recommendedName>
        <fullName>Saitohin</fullName>
    </recommendedName>
</protein>
<proteinExistence type="inferred from homology"/>
<dbReference type="EMBL" id="AY574183">
    <property type="protein sequence ID" value="AAS91741.1"/>
    <property type="molecule type" value="Genomic_DNA"/>
</dbReference>
<dbReference type="RefSeq" id="NP_001009146.1">
    <property type="nucleotide sequence ID" value="NM_001009146.1"/>
</dbReference>
<dbReference type="RefSeq" id="XP_016786230.1">
    <property type="nucleotide sequence ID" value="XM_016930741.1"/>
</dbReference>
<dbReference type="FunCoup" id="Q5YCU8">
    <property type="interactions" value="3"/>
</dbReference>
<dbReference type="GeneID" id="493950"/>
<dbReference type="KEGG" id="ptr:493950"/>
<dbReference type="CTD" id="246744"/>
<dbReference type="InParanoid" id="Q5YCU8"/>
<dbReference type="OrthoDB" id="13254at9604"/>
<dbReference type="Proteomes" id="UP000002277">
    <property type="component" value="Unplaced"/>
</dbReference>
<dbReference type="GO" id="GO:0005737">
    <property type="term" value="C:cytoplasm"/>
    <property type="evidence" value="ECO:0007669"/>
    <property type="project" value="UniProtKB-SubCell"/>
</dbReference>
<dbReference type="GO" id="GO:0005634">
    <property type="term" value="C:nucleus"/>
    <property type="evidence" value="ECO:0007669"/>
    <property type="project" value="UniProtKB-SubCell"/>
</dbReference>
<sequence length="128" mass="13761">MSEGGGRVSRIFAAPTRLCRWPALIECGVNLTQPLCEWMIQVARDRTLSLAWEVASLLTLSSSEVGLEGVGTIWPSSYSSEENSRNGAEQGRQLSIEGPFQGQNCPSHPAAALPLPMRGESQATSCQV</sequence>
<name>STH_PANTR</name>